<evidence type="ECO:0000255" key="1">
    <source>
        <dbReference type="HAMAP-Rule" id="MF_00736"/>
    </source>
</evidence>
<evidence type="ECO:0000305" key="2"/>
<reference key="1">
    <citation type="journal article" date="2008" name="PLoS ONE">
        <title>Comparative analysis of Acinetobacters: three genomes for three lifestyles.</title>
        <authorList>
            <person name="Vallenet D."/>
            <person name="Nordmann P."/>
            <person name="Barbe V."/>
            <person name="Poirel L."/>
            <person name="Mangenot S."/>
            <person name="Bataille E."/>
            <person name="Dossat C."/>
            <person name="Gas S."/>
            <person name="Kreimeyer A."/>
            <person name="Lenoble P."/>
            <person name="Oztas S."/>
            <person name="Poulain J."/>
            <person name="Segurens B."/>
            <person name="Robert C."/>
            <person name="Abergel C."/>
            <person name="Claverie J.-M."/>
            <person name="Raoult D."/>
            <person name="Medigue C."/>
            <person name="Weissenbach J."/>
            <person name="Cruveiller S."/>
        </authorList>
    </citation>
    <scope>NUCLEOTIDE SEQUENCE [LARGE SCALE GENOMIC DNA]</scope>
    <source>
        <strain>SDF</strain>
    </source>
</reference>
<protein>
    <recommendedName>
        <fullName evidence="1">Large ribosomal subunit protein uL11</fullName>
    </recommendedName>
    <alternativeName>
        <fullName evidence="2">50S ribosomal protein L11</fullName>
    </alternativeName>
</protein>
<dbReference type="EMBL" id="CU468230">
    <property type="protein sequence ID" value="CAP02517.1"/>
    <property type="molecule type" value="Genomic_DNA"/>
</dbReference>
<dbReference type="SMR" id="B0VMA3"/>
<dbReference type="KEGG" id="abm:ABSDF3247"/>
<dbReference type="HOGENOM" id="CLU_074237_2_1_6"/>
<dbReference type="Proteomes" id="UP000001741">
    <property type="component" value="Chromosome"/>
</dbReference>
<dbReference type="GO" id="GO:0022625">
    <property type="term" value="C:cytosolic large ribosomal subunit"/>
    <property type="evidence" value="ECO:0007669"/>
    <property type="project" value="TreeGrafter"/>
</dbReference>
<dbReference type="GO" id="GO:0070180">
    <property type="term" value="F:large ribosomal subunit rRNA binding"/>
    <property type="evidence" value="ECO:0007669"/>
    <property type="project" value="UniProtKB-UniRule"/>
</dbReference>
<dbReference type="GO" id="GO:0003735">
    <property type="term" value="F:structural constituent of ribosome"/>
    <property type="evidence" value="ECO:0007669"/>
    <property type="project" value="InterPro"/>
</dbReference>
<dbReference type="GO" id="GO:0006412">
    <property type="term" value="P:translation"/>
    <property type="evidence" value="ECO:0007669"/>
    <property type="project" value="UniProtKB-UniRule"/>
</dbReference>
<dbReference type="CDD" id="cd00349">
    <property type="entry name" value="Ribosomal_L11"/>
    <property type="match status" value="1"/>
</dbReference>
<dbReference type="FunFam" id="1.10.10.250:FF:000001">
    <property type="entry name" value="50S ribosomal protein L11"/>
    <property type="match status" value="1"/>
</dbReference>
<dbReference type="FunFam" id="3.30.1550.10:FF:000001">
    <property type="entry name" value="50S ribosomal protein L11"/>
    <property type="match status" value="1"/>
</dbReference>
<dbReference type="Gene3D" id="1.10.10.250">
    <property type="entry name" value="Ribosomal protein L11, C-terminal domain"/>
    <property type="match status" value="1"/>
</dbReference>
<dbReference type="Gene3D" id="3.30.1550.10">
    <property type="entry name" value="Ribosomal protein L11/L12, N-terminal domain"/>
    <property type="match status" value="1"/>
</dbReference>
<dbReference type="HAMAP" id="MF_00736">
    <property type="entry name" value="Ribosomal_uL11"/>
    <property type="match status" value="1"/>
</dbReference>
<dbReference type="InterPro" id="IPR000911">
    <property type="entry name" value="Ribosomal_uL11"/>
</dbReference>
<dbReference type="InterPro" id="IPR006519">
    <property type="entry name" value="Ribosomal_uL11_bac-typ"/>
</dbReference>
<dbReference type="InterPro" id="IPR020783">
    <property type="entry name" value="Ribosomal_uL11_C"/>
</dbReference>
<dbReference type="InterPro" id="IPR036769">
    <property type="entry name" value="Ribosomal_uL11_C_sf"/>
</dbReference>
<dbReference type="InterPro" id="IPR020785">
    <property type="entry name" value="Ribosomal_uL11_CS"/>
</dbReference>
<dbReference type="InterPro" id="IPR020784">
    <property type="entry name" value="Ribosomal_uL11_N"/>
</dbReference>
<dbReference type="InterPro" id="IPR036796">
    <property type="entry name" value="Ribosomal_uL11_N_sf"/>
</dbReference>
<dbReference type="NCBIfam" id="TIGR01632">
    <property type="entry name" value="L11_bact"/>
    <property type="match status" value="1"/>
</dbReference>
<dbReference type="PANTHER" id="PTHR11661">
    <property type="entry name" value="60S RIBOSOMAL PROTEIN L12"/>
    <property type="match status" value="1"/>
</dbReference>
<dbReference type="PANTHER" id="PTHR11661:SF1">
    <property type="entry name" value="LARGE RIBOSOMAL SUBUNIT PROTEIN UL11M"/>
    <property type="match status" value="1"/>
</dbReference>
<dbReference type="Pfam" id="PF00298">
    <property type="entry name" value="Ribosomal_L11"/>
    <property type="match status" value="1"/>
</dbReference>
<dbReference type="Pfam" id="PF03946">
    <property type="entry name" value="Ribosomal_L11_N"/>
    <property type="match status" value="1"/>
</dbReference>
<dbReference type="SMART" id="SM00649">
    <property type="entry name" value="RL11"/>
    <property type="match status" value="1"/>
</dbReference>
<dbReference type="SUPFAM" id="SSF54747">
    <property type="entry name" value="Ribosomal L11/L12e N-terminal domain"/>
    <property type="match status" value="1"/>
</dbReference>
<dbReference type="SUPFAM" id="SSF46906">
    <property type="entry name" value="Ribosomal protein L11, C-terminal domain"/>
    <property type="match status" value="1"/>
</dbReference>
<dbReference type="PROSITE" id="PS00359">
    <property type="entry name" value="RIBOSOMAL_L11"/>
    <property type="match status" value="1"/>
</dbReference>
<comment type="function">
    <text evidence="1">Forms part of the ribosomal stalk which helps the ribosome interact with GTP-bound translation factors.</text>
</comment>
<comment type="subunit">
    <text evidence="1">Part of the ribosomal stalk of the 50S ribosomal subunit. Interacts with L10 and the large rRNA to form the base of the stalk. L10 forms an elongated spine to which L12 dimers bind in a sequential fashion forming a multimeric L10(L12)X complex.</text>
</comment>
<comment type="PTM">
    <text evidence="1">One or more lysine residues are methylated.</text>
</comment>
<comment type="similarity">
    <text evidence="1">Belongs to the universal ribosomal protein uL11 family.</text>
</comment>
<organism>
    <name type="scientific">Acinetobacter baumannii (strain SDF)</name>
    <dbReference type="NCBI Taxonomy" id="509170"/>
    <lineage>
        <taxon>Bacteria</taxon>
        <taxon>Pseudomonadati</taxon>
        <taxon>Pseudomonadota</taxon>
        <taxon>Gammaproteobacteria</taxon>
        <taxon>Moraxellales</taxon>
        <taxon>Moraxellaceae</taxon>
        <taxon>Acinetobacter</taxon>
        <taxon>Acinetobacter calcoaceticus/baumannii complex</taxon>
    </lineage>
</organism>
<gene>
    <name evidence="1" type="primary">rplK</name>
    <name type="ordered locus">ABSDF3247</name>
</gene>
<name>RL11_ACIBS</name>
<proteinExistence type="inferred from homology"/>
<sequence>MAKKIDGYIKLQVPAGKANPSPPIGPALGQRGVNIMAFCKEFNAATQKVEPGLPIPVVITVYNDKSFTFIMKTPPASILLKKAAGIQKGSSVPNKTKVGKLTRAQLEEIATTKEPDLTGADLDARVRTIAGSARSMGLEVEL</sequence>
<feature type="chain" id="PRO_1000132849" description="Large ribosomal subunit protein uL11">
    <location>
        <begin position="1"/>
        <end position="142"/>
    </location>
</feature>
<accession>B0VMA3</accession>
<keyword id="KW-0488">Methylation</keyword>
<keyword id="KW-0687">Ribonucleoprotein</keyword>
<keyword id="KW-0689">Ribosomal protein</keyword>
<keyword id="KW-0694">RNA-binding</keyword>
<keyword id="KW-0699">rRNA-binding</keyword>